<reference evidence="5" key="1">
    <citation type="journal article" date="2012" name="Syst. Biol.">
        <title>Peptidomics-based phylogeny and biogeography of Mantophasmatodea (Hexapoda).</title>
        <authorList>
            <person name="Predel R."/>
            <person name="Neupert S."/>
            <person name="Huetteroth W."/>
            <person name="Kahnt J."/>
            <person name="Waidelich D."/>
            <person name="Roth S."/>
        </authorList>
    </citation>
    <scope>PROTEIN SEQUENCE</scope>
    <scope>AMIDATION AT LEU-7</scope>
    <source>
        <tissue evidence="3">Corpora cardiaca</tissue>
    </source>
</reference>
<sequence>DGYTPRL</sequence>
<keyword id="KW-0027">Amidation</keyword>
<keyword id="KW-0903">Direct protein sequencing</keyword>
<keyword id="KW-0527">Neuropeptide</keyword>
<keyword id="KW-0964">Secreted</keyword>
<accession>B0M3D6</accession>
<protein>
    <recommendedName>
        <fullName evidence="4">Pyrokinin-1</fullName>
        <shortName evidence="4">PK-1</shortName>
    </recommendedName>
    <alternativeName>
        <fullName evidence="1">YXPRL-amide</fullName>
    </alternativeName>
</protein>
<feature type="peptide" id="PRO_0000420783" description="Pyrokinin-1" evidence="3">
    <location>
        <begin position="1"/>
        <end position="7"/>
    </location>
</feature>
<feature type="modified residue" description="Leucine amide" evidence="3">
    <location>
        <position position="7"/>
    </location>
</feature>
<name>PPK1_MANKU</name>
<evidence type="ECO:0000250" key="1">
    <source>
        <dbReference type="UniProtKB" id="P82619"/>
    </source>
</evidence>
<evidence type="ECO:0000255" key="2"/>
<evidence type="ECO:0000269" key="3">
    <source>
    </source>
</evidence>
<evidence type="ECO:0000303" key="4">
    <source>
    </source>
</evidence>
<evidence type="ECO:0000305" key="5"/>
<evidence type="ECO:0000305" key="6">
    <source>
    </source>
</evidence>
<comment type="function">
    <text evidence="1">Myoactive.</text>
</comment>
<comment type="subcellular location">
    <subcellularLocation>
        <location evidence="6">Secreted</location>
    </subcellularLocation>
</comment>
<comment type="similarity">
    <text evidence="2">Belongs to the pyrokinin family.</text>
</comment>
<dbReference type="GO" id="GO:0005576">
    <property type="term" value="C:extracellular region"/>
    <property type="evidence" value="ECO:0007669"/>
    <property type="project" value="UniProtKB-SubCell"/>
</dbReference>
<dbReference type="GO" id="GO:0007218">
    <property type="term" value="P:neuropeptide signaling pathway"/>
    <property type="evidence" value="ECO:0007669"/>
    <property type="project" value="UniProtKB-KW"/>
</dbReference>
<organism>
    <name type="scientific">Mantophasma kudubergense</name>
    <name type="common">Gladiator</name>
    <name type="synonym">Heel-walker</name>
    <dbReference type="NCBI Taxonomy" id="1037657"/>
    <lineage>
        <taxon>Eukaryota</taxon>
        <taxon>Metazoa</taxon>
        <taxon>Ecdysozoa</taxon>
        <taxon>Arthropoda</taxon>
        <taxon>Hexapoda</taxon>
        <taxon>Insecta</taxon>
        <taxon>Pterygota</taxon>
        <taxon>Neoptera</taxon>
        <taxon>Polyneoptera</taxon>
        <taxon>Mantophasmatodea</taxon>
        <taxon>Mantophasmatidae</taxon>
        <taxon>Mantophasma</taxon>
    </lineage>
</organism>
<proteinExistence type="evidence at protein level"/>